<feature type="chain" id="PRO_0000051702" description="Cytochrome P450 2C12, female-specific">
    <location>
        <begin position="1"/>
        <end position="490"/>
    </location>
</feature>
<feature type="binding site" description="axial binding residue" evidence="1">
    <location>
        <position position="435"/>
    </location>
    <ligand>
        <name>heme</name>
        <dbReference type="ChEBI" id="CHEBI:30413"/>
    </ligand>
    <ligandPart>
        <name>Fe</name>
        <dbReference type="ChEBI" id="CHEBI:18248"/>
    </ligandPart>
</feature>
<evidence type="ECO:0000250" key="1"/>
<evidence type="ECO:0000305" key="2"/>
<reference key="1">
    <citation type="journal article" date="1988" name="Proc. Natl. Acad. Sci. U.S.A.">
        <title>cDNA cloning, sequence, and regulation of a major female-specific and growth hormone-inducible rat liver cytochrome P-450 active in 15 beta-hydroxylation of steroid sulfates.</title>
        <authorList>
            <person name="Zaphiropoulos P.G."/>
            <person name="Mode A."/>
            <person name="Stroem A."/>
            <person name="Moeller C."/>
            <person name="Fernandez C."/>
            <person name="Gustafsson J.-A."/>
        </authorList>
    </citation>
    <scope>NUCLEOTIDE SEQUENCE [MRNA]</scope>
</reference>
<reference key="2">
    <citation type="journal article" date="1988" name="Acta Med. Scand. Suppl.">
        <title>Sequence and regulation of two growth-hormone-controlled, sex-specific isozymes of cytochrome P-450 in rat liver, P-450(15)beta and P-450(16)alpha.</title>
        <authorList>
            <person name="Zaphiropoulos P.G."/>
            <person name="Mode A."/>
            <person name="Stroem A."/>
            <person name="Husman B."/>
            <person name="Andersson G."/>
            <person name="Gustafsson J.-A."/>
        </authorList>
    </citation>
    <scope>NUCLEOTIDE SEQUENCE [MRNA]</scope>
</reference>
<proteinExistence type="evidence at transcript level"/>
<name>CP2CC_RAT</name>
<keyword id="KW-0256">Endoplasmic reticulum</keyword>
<keyword id="KW-0349">Heme</keyword>
<keyword id="KW-0408">Iron</keyword>
<keyword id="KW-0472">Membrane</keyword>
<keyword id="KW-0479">Metal-binding</keyword>
<keyword id="KW-0492">Microsome</keyword>
<keyword id="KW-0503">Monooxygenase</keyword>
<keyword id="KW-0560">Oxidoreductase</keyword>
<keyword id="KW-1185">Reference proteome</keyword>
<gene>
    <name type="primary">Cyp2c12</name>
    <name type="synonym">Cyp2c-12</name>
    <name type="synonym">Cyp2c40</name>
</gene>
<protein>
    <recommendedName>
        <fullName>Cytochrome P450 2C12, female-specific</fullName>
        <ecNumber>1.14.14.1</ecNumber>
    </recommendedName>
    <alternativeName>
        <fullName>CYPIIC12</fullName>
    </alternativeName>
    <alternativeName>
        <fullName>Cytochrome P450 15-beta</fullName>
    </alternativeName>
    <alternativeName>
        <fullName>Cytochrome P450-UT-1</fullName>
    </alternativeName>
    <alternativeName>
        <fullName>Cytochrome P450-UT-I</fullName>
    </alternativeName>
    <alternativeName>
        <fullName>Cytochrome P450I</fullName>
    </alternativeName>
</protein>
<accession>P11510</accession>
<organism>
    <name type="scientific">Rattus norvegicus</name>
    <name type="common">Rat</name>
    <dbReference type="NCBI Taxonomy" id="10116"/>
    <lineage>
        <taxon>Eukaryota</taxon>
        <taxon>Metazoa</taxon>
        <taxon>Chordata</taxon>
        <taxon>Craniata</taxon>
        <taxon>Vertebrata</taxon>
        <taxon>Euteleostomi</taxon>
        <taxon>Mammalia</taxon>
        <taxon>Eutheria</taxon>
        <taxon>Euarchontoglires</taxon>
        <taxon>Glires</taxon>
        <taxon>Rodentia</taxon>
        <taxon>Myomorpha</taxon>
        <taxon>Muroidea</taxon>
        <taxon>Muridae</taxon>
        <taxon>Murinae</taxon>
        <taxon>Rattus</taxon>
    </lineage>
</organism>
<dbReference type="EC" id="1.14.14.1"/>
<dbReference type="EMBL" id="J03786">
    <property type="protein sequence ID" value="AAA41005.1"/>
    <property type="molecule type" value="mRNA"/>
</dbReference>
<dbReference type="PIR" id="A32140">
    <property type="entry name" value="A32140"/>
</dbReference>
<dbReference type="RefSeq" id="NP_113760.1">
    <property type="nucleotide sequence ID" value="NM_031572.1"/>
</dbReference>
<dbReference type="SMR" id="P11510"/>
<dbReference type="FunCoup" id="P11510">
    <property type="interactions" value="55"/>
</dbReference>
<dbReference type="IntAct" id="P11510">
    <property type="interactions" value="1"/>
</dbReference>
<dbReference type="STRING" id="10116.ENSRNOP00000015802"/>
<dbReference type="DrugBank" id="DB15093">
    <property type="generic name" value="Somapacitan"/>
</dbReference>
<dbReference type="GlyGen" id="P11510">
    <property type="glycosylation" value="1 site"/>
</dbReference>
<dbReference type="PaxDb" id="10116-ENSRNOP00000015802"/>
<dbReference type="GeneID" id="25011"/>
<dbReference type="KEGG" id="rno:25011"/>
<dbReference type="AGR" id="RGD:2470"/>
<dbReference type="CTD" id="25011"/>
<dbReference type="RGD" id="2470">
    <property type="gene designation" value="Cyp2c12"/>
</dbReference>
<dbReference type="eggNOG" id="KOG0156">
    <property type="taxonomic scope" value="Eukaryota"/>
</dbReference>
<dbReference type="InParanoid" id="P11510"/>
<dbReference type="PhylomeDB" id="P11510"/>
<dbReference type="PRO" id="PR:P11510"/>
<dbReference type="Proteomes" id="UP000002494">
    <property type="component" value="Unplaced"/>
</dbReference>
<dbReference type="GO" id="GO:0005737">
    <property type="term" value="C:cytoplasm"/>
    <property type="evidence" value="ECO:0000318"/>
    <property type="project" value="GO_Central"/>
</dbReference>
<dbReference type="GO" id="GO:0005789">
    <property type="term" value="C:endoplasmic reticulum membrane"/>
    <property type="evidence" value="ECO:0007669"/>
    <property type="project" value="UniProtKB-SubCell"/>
</dbReference>
<dbReference type="GO" id="GO:0043231">
    <property type="term" value="C:intracellular membrane-bounded organelle"/>
    <property type="evidence" value="ECO:0000318"/>
    <property type="project" value="GO_Central"/>
</dbReference>
<dbReference type="GO" id="GO:0020037">
    <property type="term" value="F:heme binding"/>
    <property type="evidence" value="ECO:0000318"/>
    <property type="project" value="GO_Central"/>
</dbReference>
<dbReference type="GO" id="GO:0005506">
    <property type="term" value="F:iron ion binding"/>
    <property type="evidence" value="ECO:0007669"/>
    <property type="project" value="InterPro"/>
</dbReference>
<dbReference type="GO" id="GO:0016712">
    <property type="term" value="F:oxidoreductase activity, acting on paired donors, with incorporation or reduction of molecular oxygen, reduced flavin or flavoprotein as one donor, and incorporation of one atom of oxygen"/>
    <property type="evidence" value="ECO:0000318"/>
    <property type="project" value="GO_Central"/>
</dbReference>
<dbReference type="GO" id="GO:0006082">
    <property type="term" value="P:organic acid metabolic process"/>
    <property type="evidence" value="ECO:0000318"/>
    <property type="project" value="GO_Central"/>
</dbReference>
<dbReference type="GO" id="GO:0006805">
    <property type="term" value="P:xenobiotic metabolic process"/>
    <property type="evidence" value="ECO:0000318"/>
    <property type="project" value="GO_Central"/>
</dbReference>
<dbReference type="CDD" id="cd20665">
    <property type="entry name" value="CYP2C-like"/>
    <property type="match status" value="1"/>
</dbReference>
<dbReference type="FunFam" id="1.10.630.10:FF:000299">
    <property type="entry name" value="Cytochrome P450 2C9"/>
    <property type="match status" value="1"/>
</dbReference>
<dbReference type="Gene3D" id="1.10.630.10">
    <property type="entry name" value="Cytochrome P450"/>
    <property type="match status" value="1"/>
</dbReference>
<dbReference type="InterPro" id="IPR001128">
    <property type="entry name" value="Cyt_P450"/>
</dbReference>
<dbReference type="InterPro" id="IPR017972">
    <property type="entry name" value="Cyt_P450_CS"/>
</dbReference>
<dbReference type="InterPro" id="IPR002401">
    <property type="entry name" value="Cyt_P450_E_grp-I"/>
</dbReference>
<dbReference type="InterPro" id="IPR036396">
    <property type="entry name" value="Cyt_P450_sf"/>
</dbReference>
<dbReference type="InterPro" id="IPR050182">
    <property type="entry name" value="Cytochrome_P450_fam2"/>
</dbReference>
<dbReference type="PANTHER" id="PTHR24300:SF140">
    <property type="entry name" value="CYTOCHROME P450 2C40-RELATED"/>
    <property type="match status" value="1"/>
</dbReference>
<dbReference type="PANTHER" id="PTHR24300">
    <property type="entry name" value="CYTOCHROME P450 508A4-RELATED"/>
    <property type="match status" value="1"/>
</dbReference>
<dbReference type="Pfam" id="PF00067">
    <property type="entry name" value="p450"/>
    <property type="match status" value="1"/>
</dbReference>
<dbReference type="PRINTS" id="PR00463">
    <property type="entry name" value="EP450I"/>
</dbReference>
<dbReference type="PRINTS" id="PR00385">
    <property type="entry name" value="P450"/>
</dbReference>
<dbReference type="SUPFAM" id="SSF48264">
    <property type="entry name" value="Cytochrome P450"/>
    <property type="match status" value="1"/>
</dbReference>
<dbReference type="PROSITE" id="PS00086">
    <property type="entry name" value="CYTOCHROME_P450"/>
    <property type="match status" value="1"/>
</dbReference>
<sequence>MDPFVVLVLSLSFLLLLYLWRPSPGRGKLPPGPTPLPIFGNFLQIDMKDIRQSISNFSKTYGPVFTLYFGSQPTVVLHGYEAVKEALIDYGEEFSGRGRMPVFEKATKGLGISFSRGNVWRATRHFTVNTLRSLGMGKRTIEIKVQEEAEWLVMELKKTKGSPCDPKFIIGCAPCNVICSIIFQNRFDYKDKDFLSLIENVNEYIKIVSTPAFQVFNAFPILLDYCPGNHKTHSKHFAAIKSYLLKKIKEHEESLDVSNPRDFIDYFLIQRCQENGNQQMNYTQEHLAILVTNLFIGGTETSSLTLRFALLLLMKYPHITDKVQEEIGQVIGRHRSPCMLDRIHMPYTNAMIHEVQRYIDLAPNGLLHEVTCDTKFRDYFIPKGTAVLTSLTSVLHARKEFPNPEMFDPGHFLDENGNFKKSDYFMPFSAGKRKCVGEGLASMELFLFLTTILQNFKLKSLSDPKDIDINSIRSEFSSIPPTFQLCFIPV</sequence>
<comment type="function">
    <text>This P450 is active in 15-beta-hydroxylation of steroid sulfates.</text>
</comment>
<comment type="catalytic activity">
    <reaction>
        <text>an organic molecule + reduced [NADPH--hemoprotein reductase] + O2 = an alcohol + oxidized [NADPH--hemoprotein reductase] + H2O + H(+)</text>
        <dbReference type="Rhea" id="RHEA:17149"/>
        <dbReference type="Rhea" id="RHEA-COMP:11964"/>
        <dbReference type="Rhea" id="RHEA-COMP:11965"/>
        <dbReference type="ChEBI" id="CHEBI:15377"/>
        <dbReference type="ChEBI" id="CHEBI:15378"/>
        <dbReference type="ChEBI" id="CHEBI:15379"/>
        <dbReference type="ChEBI" id="CHEBI:30879"/>
        <dbReference type="ChEBI" id="CHEBI:57618"/>
        <dbReference type="ChEBI" id="CHEBI:58210"/>
        <dbReference type="ChEBI" id="CHEBI:142491"/>
        <dbReference type="EC" id="1.14.14.1"/>
    </reaction>
</comment>
<comment type="cofactor">
    <cofactor evidence="1">
        <name>heme</name>
        <dbReference type="ChEBI" id="CHEBI:30413"/>
    </cofactor>
</comment>
<comment type="subcellular location">
    <subcellularLocation>
        <location>Endoplasmic reticulum membrane</location>
        <topology>Peripheral membrane protein</topology>
    </subcellularLocation>
    <subcellularLocation>
        <location>Microsome membrane</location>
        <topology>Peripheral membrane protein</topology>
    </subcellularLocation>
</comment>
<comment type="induction">
    <text>By growth hormone.</text>
</comment>
<comment type="similarity">
    <text evidence="2">Belongs to the cytochrome P450 family.</text>
</comment>